<organism>
    <name type="scientific">Helicobacter pylori (strain ATCC 700392 / 26695)</name>
    <name type="common">Campylobacter pylori</name>
    <dbReference type="NCBI Taxonomy" id="85962"/>
    <lineage>
        <taxon>Bacteria</taxon>
        <taxon>Pseudomonadati</taxon>
        <taxon>Campylobacterota</taxon>
        <taxon>Epsilonproteobacteria</taxon>
        <taxon>Campylobacterales</taxon>
        <taxon>Helicobacteraceae</taxon>
        <taxon>Helicobacter</taxon>
    </lineage>
</organism>
<sequence>MFSNQYIQQRIHKANSLREEGKNPYQNGLKRSLTNAAFLEKYAYVKGLEEPKDKEKCESIVGRVKLLRLMGKACFIKVEDESTILQVYVSQNELNDEFKSLKKHLEVGDIVLVKGFPFATKTGELSIHALEFHILSKTIVPLPEKFHGLSDIELRYRQRYLDLIVNPSVKDVFKKRSLIVSSVRKFFEMEGFLEVETPMMHPIPGGANARPFITYHNALEVERYLRIAPELYLKRLIVGGFEAVFEINRNFRNEGMDHSHNPEFTMIEFYWAYHTYEDLIELSKRLFDYLLKTLNLDSKIIYNDMEVDFNQTSVISYLDALETIGGISKDILEKEDRLLAYLLEQGIKVEPNLTYGKLLAEAFDHFVEHQLINPTFVTQYPIEISPLARRNDSNPNIADRFELFIAGKEIANGFSELNDPLDQLERFKNQVAEKEKGDEEAQYMDEDYVWALAHGMPPTAGQGIGIDRLVMLLTGAKSIKDVILFPAMRPVKNDFNVESEE</sequence>
<dbReference type="EC" id="6.1.1.6"/>
<dbReference type="EMBL" id="AE000511">
    <property type="protein sequence ID" value="AAD07251.1"/>
    <property type="molecule type" value="Genomic_DNA"/>
</dbReference>
<dbReference type="PIR" id="F64542">
    <property type="entry name" value="F64542"/>
</dbReference>
<dbReference type="RefSeq" id="NP_206981.1">
    <property type="nucleotide sequence ID" value="NC_000915.1"/>
</dbReference>
<dbReference type="RefSeq" id="WP_000492582.1">
    <property type="nucleotide sequence ID" value="NC_018939.1"/>
</dbReference>
<dbReference type="SMR" id="P56126"/>
<dbReference type="DIP" id="DIP-3629N"/>
<dbReference type="FunCoup" id="P56126">
    <property type="interactions" value="415"/>
</dbReference>
<dbReference type="IntAct" id="P56126">
    <property type="interactions" value="4"/>
</dbReference>
<dbReference type="MINT" id="P56126"/>
<dbReference type="STRING" id="85962.HP_0182"/>
<dbReference type="PaxDb" id="85962-C694_00905"/>
<dbReference type="EnsemblBacteria" id="AAD07251">
    <property type="protein sequence ID" value="AAD07251"/>
    <property type="gene ID" value="HP_0182"/>
</dbReference>
<dbReference type="KEGG" id="heo:C694_00905"/>
<dbReference type="KEGG" id="hpy:HP_0182"/>
<dbReference type="PATRIC" id="fig|85962.47.peg.197"/>
<dbReference type="eggNOG" id="COG1190">
    <property type="taxonomic scope" value="Bacteria"/>
</dbReference>
<dbReference type="InParanoid" id="P56126"/>
<dbReference type="OrthoDB" id="9801152at2"/>
<dbReference type="PhylomeDB" id="P56126"/>
<dbReference type="Proteomes" id="UP000000429">
    <property type="component" value="Chromosome"/>
</dbReference>
<dbReference type="GO" id="GO:0005737">
    <property type="term" value="C:cytoplasm"/>
    <property type="evidence" value="ECO:0000318"/>
    <property type="project" value="GO_Central"/>
</dbReference>
<dbReference type="GO" id="GO:0005829">
    <property type="term" value="C:cytosol"/>
    <property type="evidence" value="ECO:0000318"/>
    <property type="project" value="GO_Central"/>
</dbReference>
<dbReference type="GO" id="GO:0005524">
    <property type="term" value="F:ATP binding"/>
    <property type="evidence" value="ECO:0007669"/>
    <property type="project" value="UniProtKB-UniRule"/>
</dbReference>
<dbReference type="GO" id="GO:0004824">
    <property type="term" value="F:lysine-tRNA ligase activity"/>
    <property type="evidence" value="ECO:0000318"/>
    <property type="project" value="GO_Central"/>
</dbReference>
<dbReference type="GO" id="GO:0000287">
    <property type="term" value="F:magnesium ion binding"/>
    <property type="evidence" value="ECO:0007669"/>
    <property type="project" value="UniProtKB-UniRule"/>
</dbReference>
<dbReference type="GO" id="GO:0000049">
    <property type="term" value="F:tRNA binding"/>
    <property type="evidence" value="ECO:0000318"/>
    <property type="project" value="GO_Central"/>
</dbReference>
<dbReference type="GO" id="GO:0006430">
    <property type="term" value="P:lysyl-tRNA aminoacylation"/>
    <property type="evidence" value="ECO:0000318"/>
    <property type="project" value="GO_Central"/>
</dbReference>
<dbReference type="CDD" id="cd00775">
    <property type="entry name" value="LysRS_core"/>
    <property type="match status" value="1"/>
</dbReference>
<dbReference type="CDD" id="cd04322">
    <property type="entry name" value="LysRS_N"/>
    <property type="match status" value="1"/>
</dbReference>
<dbReference type="FunFam" id="3.30.930.10:FF:000164">
    <property type="entry name" value="Lysine--tRNA ligase"/>
    <property type="match status" value="1"/>
</dbReference>
<dbReference type="Gene3D" id="3.30.930.10">
    <property type="entry name" value="Bira Bifunctional Protein, Domain 2"/>
    <property type="match status" value="1"/>
</dbReference>
<dbReference type="Gene3D" id="2.40.50.140">
    <property type="entry name" value="Nucleic acid-binding proteins"/>
    <property type="match status" value="1"/>
</dbReference>
<dbReference type="HAMAP" id="MF_00252">
    <property type="entry name" value="Lys_tRNA_synth_class2"/>
    <property type="match status" value="1"/>
</dbReference>
<dbReference type="InterPro" id="IPR004364">
    <property type="entry name" value="Aa-tRNA-synt_II"/>
</dbReference>
<dbReference type="InterPro" id="IPR006195">
    <property type="entry name" value="aa-tRNA-synth_II"/>
</dbReference>
<dbReference type="InterPro" id="IPR045864">
    <property type="entry name" value="aa-tRNA-synth_II/BPL/LPL"/>
</dbReference>
<dbReference type="InterPro" id="IPR002313">
    <property type="entry name" value="Lys-tRNA-ligase_II"/>
</dbReference>
<dbReference type="InterPro" id="IPR044136">
    <property type="entry name" value="Lys-tRNA-ligase_II_N"/>
</dbReference>
<dbReference type="InterPro" id="IPR018149">
    <property type="entry name" value="Lys-tRNA-synth_II_C"/>
</dbReference>
<dbReference type="InterPro" id="IPR012340">
    <property type="entry name" value="NA-bd_OB-fold"/>
</dbReference>
<dbReference type="InterPro" id="IPR004365">
    <property type="entry name" value="NA-bd_OB_tRNA"/>
</dbReference>
<dbReference type="NCBIfam" id="TIGR00499">
    <property type="entry name" value="lysS_bact"/>
    <property type="match status" value="1"/>
</dbReference>
<dbReference type="NCBIfam" id="NF001756">
    <property type="entry name" value="PRK00484.1"/>
    <property type="match status" value="1"/>
</dbReference>
<dbReference type="PANTHER" id="PTHR42918:SF15">
    <property type="entry name" value="LYSINE--TRNA LIGASE, CHLOROPLASTIC_MITOCHONDRIAL"/>
    <property type="match status" value="1"/>
</dbReference>
<dbReference type="PANTHER" id="PTHR42918">
    <property type="entry name" value="LYSYL-TRNA SYNTHETASE"/>
    <property type="match status" value="1"/>
</dbReference>
<dbReference type="Pfam" id="PF00152">
    <property type="entry name" value="tRNA-synt_2"/>
    <property type="match status" value="1"/>
</dbReference>
<dbReference type="Pfam" id="PF01336">
    <property type="entry name" value="tRNA_anti-codon"/>
    <property type="match status" value="1"/>
</dbReference>
<dbReference type="PRINTS" id="PR00982">
    <property type="entry name" value="TRNASYNTHLYS"/>
</dbReference>
<dbReference type="SUPFAM" id="SSF55681">
    <property type="entry name" value="Class II aaRS and biotin synthetases"/>
    <property type="match status" value="1"/>
</dbReference>
<dbReference type="SUPFAM" id="SSF50249">
    <property type="entry name" value="Nucleic acid-binding proteins"/>
    <property type="match status" value="1"/>
</dbReference>
<dbReference type="PROSITE" id="PS50862">
    <property type="entry name" value="AA_TRNA_LIGASE_II"/>
    <property type="match status" value="1"/>
</dbReference>
<keyword id="KW-0030">Aminoacyl-tRNA synthetase</keyword>
<keyword id="KW-0067">ATP-binding</keyword>
<keyword id="KW-0963">Cytoplasm</keyword>
<keyword id="KW-0436">Ligase</keyword>
<keyword id="KW-0460">Magnesium</keyword>
<keyword id="KW-0479">Metal-binding</keyword>
<keyword id="KW-0547">Nucleotide-binding</keyword>
<keyword id="KW-0648">Protein biosynthesis</keyword>
<keyword id="KW-1185">Reference proteome</keyword>
<proteinExistence type="inferred from homology"/>
<evidence type="ECO:0000250" key="1"/>
<evidence type="ECO:0000305" key="2"/>
<protein>
    <recommendedName>
        <fullName>Lysine--tRNA ligase</fullName>
        <ecNumber>6.1.1.6</ecNumber>
    </recommendedName>
    <alternativeName>
        <fullName>Lysyl-tRNA synthetase</fullName>
        <shortName>LysRS</shortName>
    </alternativeName>
</protein>
<comment type="catalytic activity">
    <reaction>
        <text>tRNA(Lys) + L-lysine + ATP = L-lysyl-tRNA(Lys) + AMP + diphosphate</text>
        <dbReference type="Rhea" id="RHEA:20792"/>
        <dbReference type="Rhea" id="RHEA-COMP:9696"/>
        <dbReference type="Rhea" id="RHEA-COMP:9697"/>
        <dbReference type="ChEBI" id="CHEBI:30616"/>
        <dbReference type="ChEBI" id="CHEBI:32551"/>
        <dbReference type="ChEBI" id="CHEBI:33019"/>
        <dbReference type="ChEBI" id="CHEBI:78442"/>
        <dbReference type="ChEBI" id="CHEBI:78529"/>
        <dbReference type="ChEBI" id="CHEBI:456215"/>
        <dbReference type="EC" id="6.1.1.6"/>
    </reaction>
</comment>
<comment type="cofactor">
    <cofactor evidence="1">
        <name>Mg(2+)</name>
        <dbReference type="ChEBI" id="CHEBI:18420"/>
    </cofactor>
    <text evidence="1">Binds 3 Mg(2+) ions per subunit.</text>
</comment>
<comment type="subunit">
    <text evidence="1">Homodimer.</text>
</comment>
<comment type="subcellular location">
    <subcellularLocation>
        <location evidence="1">Cytoplasm</location>
    </subcellularLocation>
</comment>
<comment type="similarity">
    <text evidence="2">Belongs to the class-II aminoacyl-tRNA synthetase family.</text>
</comment>
<feature type="chain" id="PRO_0000152636" description="Lysine--tRNA ligase">
    <location>
        <begin position="1"/>
        <end position="501"/>
    </location>
</feature>
<feature type="binding site" evidence="1">
    <location>
        <position position="402"/>
    </location>
    <ligand>
        <name>Mg(2+)</name>
        <dbReference type="ChEBI" id="CHEBI:18420"/>
        <label>1</label>
    </ligand>
</feature>
<feature type="binding site" evidence="1">
    <location>
        <position position="409"/>
    </location>
    <ligand>
        <name>Mg(2+)</name>
        <dbReference type="ChEBI" id="CHEBI:18420"/>
        <label>1</label>
    </ligand>
</feature>
<feature type="binding site" evidence="1">
    <location>
        <position position="409"/>
    </location>
    <ligand>
        <name>Mg(2+)</name>
        <dbReference type="ChEBI" id="CHEBI:18420"/>
        <label>2</label>
    </ligand>
</feature>
<accession>P56126</accession>
<name>SYK_HELPY</name>
<reference key="1">
    <citation type="journal article" date="1997" name="Nature">
        <title>The complete genome sequence of the gastric pathogen Helicobacter pylori.</title>
        <authorList>
            <person name="Tomb J.-F."/>
            <person name="White O."/>
            <person name="Kerlavage A.R."/>
            <person name="Clayton R.A."/>
            <person name="Sutton G.G."/>
            <person name="Fleischmann R.D."/>
            <person name="Ketchum K.A."/>
            <person name="Klenk H.-P."/>
            <person name="Gill S.R."/>
            <person name="Dougherty B.A."/>
            <person name="Nelson K.E."/>
            <person name="Quackenbush J."/>
            <person name="Zhou L."/>
            <person name="Kirkness E.F."/>
            <person name="Peterson S.N."/>
            <person name="Loftus B.J."/>
            <person name="Richardson D.L."/>
            <person name="Dodson R.J."/>
            <person name="Khalak H.G."/>
            <person name="Glodek A."/>
            <person name="McKenney K."/>
            <person name="FitzGerald L.M."/>
            <person name="Lee N."/>
            <person name="Adams M.D."/>
            <person name="Hickey E.K."/>
            <person name="Berg D.E."/>
            <person name="Gocayne J.D."/>
            <person name="Utterback T.R."/>
            <person name="Peterson J.D."/>
            <person name="Kelley J.M."/>
            <person name="Cotton M.D."/>
            <person name="Weidman J.F."/>
            <person name="Fujii C."/>
            <person name="Bowman C."/>
            <person name="Watthey L."/>
            <person name="Wallin E."/>
            <person name="Hayes W.S."/>
            <person name="Borodovsky M."/>
            <person name="Karp P.D."/>
            <person name="Smith H.O."/>
            <person name="Fraser C.M."/>
            <person name="Venter J.C."/>
        </authorList>
    </citation>
    <scope>NUCLEOTIDE SEQUENCE [LARGE SCALE GENOMIC DNA]</scope>
    <source>
        <strain>ATCC 700392 / 26695</strain>
    </source>
</reference>
<gene>
    <name type="primary">lysS</name>
    <name type="ordered locus">HP_0182</name>
</gene>